<dbReference type="EMBL" id="AE009947">
    <property type="protein sequence ID" value="AAT44684.1"/>
    <property type="molecule type" value="Genomic_DNA"/>
</dbReference>
<dbReference type="SMR" id="Q6L3A8"/>
<dbReference type="GO" id="GO:0009535">
    <property type="term" value="C:chloroplast thylakoid membrane"/>
    <property type="evidence" value="ECO:0007669"/>
    <property type="project" value="UniProtKB-SubCell"/>
</dbReference>
<dbReference type="GO" id="GO:0009512">
    <property type="term" value="C:cytochrome b6f complex"/>
    <property type="evidence" value="ECO:0007669"/>
    <property type="project" value="InterPro"/>
</dbReference>
<dbReference type="GO" id="GO:0045158">
    <property type="term" value="F:electron transporter, transferring electrons within cytochrome b6/f complex of photosystem II activity"/>
    <property type="evidence" value="ECO:0007669"/>
    <property type="project" value="InterPro"/>
</dbReference>
<dbReference type="GO" id="GO:0017004">
    <property type="term" value="P:cytochrome complex assembly"/>
    <property type="evidence" value="ECO:0007669"/>
    <property type="project" value="UniProtKB-UniRule"/>
</dbReference>
<dbReference type="GO" id="GO:0015979">
    <property type="term" value="P:photosynthesis"/>
    <property type="evidence" value="ECO:0007669"/>
    <property type="project" value="UniProtKB-KW"/>
</dbReference>
<dbReference type="HAMAP" id="MF_00395">
    <property type="entry name" value="Cytb6_f_PetN"/>
    <property type="match status" value="1"/>
</dbReference>
<dbReference type="InterPro" id="IPR036143">
    <property type="entry name" value="Cytochr_b6-f_cplx_su8_sf"/>
</dbReference>
<dbReference type="InterPro" id="IPR005497">
    <property type="entry name" value="Cytochrome_b6-f_cplx_su8"/>
</dbReference>
<dbReference type="Pfam" id="PF03742">
    <property type="entry name" value="PetN"/>
    <property type="match status" value="1"/>
</dbReference>
<dbReference type="SUPFAM" id="SSF103451">
    <property type="entry name" value="PetN subunit of the cytochrome b6f complex"/>
    <property type="match status" value="1"/>
</dbReference>
<accession>Q6L3A8</accession>
<comment type="function">
    <text evidence="1">Component of the cytochrome b6-f complex, which mediates electron transfer between photosystem II (PSII) and photosystem I (PSI), cyclic electron flow around PSI, and state transitions.</text>
</comment>
<comment type="subunit">
    <text evidence="1">The 4 large subunits of the cytochrome b6-f complex are cytochrome b6, subunit IV (17 kDa polypeptide, PetD), cytochrome f and the Rieske protein, while the 4 small subunits are PetG, PetL, PetM and PetN. The complex functions as a dimer.</text>
</comment>
<comment type="subcellular location">
    <subcellularLocation>
        <location evidence="1">Plastid</location>
        <location evidence="1">Chloroplast thylakoid membrane</location>
        <topology evidence="1">Single-pass membrane protein</topology>
    </subcellularLocation>
</comment>
<comment type="similarity">
    <text evidence="1">Belongs to the PetN family.</text>
</comment>
<reference key="1">
    <citation type="journal article" date="2004" name="Curr. Genet.">
        <title>Structural features and transcript-editing analysis of sugarcane (Saccharum officinarum L.) chloroplast genome.</title>
        <authorList>
            <person name="Calsa T. Jr."/>
            <person name="Carraro D.M."/>
            <person name="Benatti M.R."/>
            <person name="Barbosa A.C."/>
            <person name="Kitajima J.P."/>
            <person name="Carrer H."/>
        </authorList>
    </citation>
    <scope>NUCLEOTIDE SEQUENCE [LARGE SCALE GENOMIC DNA]</scope>
    <source>
        <strain>cv. SP-80-3280</strain>
    </source>
</reference>
<organism>
    <name type="scientific">Saccharum hybrid</name>
    <name type="common">Sugarcane</name>
    <dbReference type="NCBI Taxonomy" id="15819"/>
    <lineage>
        <taxon>Eukaryota</taxon>
        <taxon>Viridiplantae</taxon>
        <taxon>Streptophyta</taxon>
        <taxon>Embryophyta</taxon>
        <taxon>Tracheophyta</taxon>
        <taxon>Spermatophyta</taxon>
        <taxon>Magnoliopsida</taxon>
        <taxon>Liliopsida</taxon>
        <taxon>Poales</taxon>
        <taxon>Poaceae</taxon>
        <taxon>PACMAD clade</taxon>
        <taxon>Panicoideae</taxon>
        <taxon>Andropogonodae</taxon>
        <taxon>Andropogoneae</taxon>
        <taxon>Saccharinae</taxon>
        <taxon>Saccharum</taxon>
    </lineage>
</organism>
<sequence>MDIVSLAWAALMVVFTFSLSLVVWGRSGL</sequence>
<feature type="chain" id="PRO_0000217128" description="Cytochrome b6-f complex subunit 8">
    <location>
        <begin position="1"/>
        <end position="29"/>
    </location>
</feature>
<feature type="transmembrane region" description="Helical" evidence="1">
    <location>
        <begin position="3"/>
        <end position="23"/>
    </location>
</feature>
<name>PETN_SACHY</name>
<proteinExistence type="inferred from homology"/>
<evidence type="ECO:0000255" key="1">
    <source>
        <dbReference type="HAMAP-Rule" id="MF_00395"/>
    </source>
</evidence>
<geneLocation type="chloroplast"/>
<protein>
    <recommendedName>
        <fullName evidence="1">Cytochrome b6-f complex subunit 8</fullName>
    </recommendedName>
    <alternativeName>
        <fullName evidence="1">Cytochrome b6-f complex subunit PetN</fullName>
    </alternativeName>
    <alternativeName>
        <fullName evidence="1">Cytochrome b6-f complex subunit VIII</fullName>
    </alternativeName>
</protein>
<gene>
    <name evidence="1" type="primary">petN</name>
    <name type="ordered locus">PS104</name>
</gene>
<keyword id="KW-0150">Chloroplast</keyword>
<keyword id="KW-0249">Electron transport</keyword>
<keyword id="KW-0472">Membrane</keyword>
<keyword id="KW-0602">Photosynthesis</keyword>
<keyword id="KW-0934">Plastid</keyword>
<keyword id="KW-0793">Thylakoid</keyword>
<keyword id="KW-0812">Transmembrane</keyword>
<keyword id="KW-1133">Transmembrane helix</keyword>
<keyword id="KW-0813">Transport</keyword>